<keyword id="KW-1185">Reference proteome</keyword>
<accession>Q75C80</accession>
<feature type="chain" id="PRO_0000292479" description="Protein FYV8">
    <location>
        <begin position="1"/>
        <end position="751"/>
    </location>
</feature>
<feature type="region of interest" description="Disordered" evidence="2">
    <location>
        <begin position="1"/>
        <end position="278"/>
    </location>
</feature>
<feature type="region of interest" description="Disordered" evidence="2">
    <location>
        <begin position="320"/>
        <end position="428"/>
    </location>
</feature>
<feature type="region of interest" description="Disordered" evidence="2">
    <location>
        <begin position="489"/>
        <end position="523"/>
    </location>
</feature>
<feature type="region of interest" description="Disordered" evidence="2">
    <location>
        <begin position="564"/>
        <end position="596"/>
    </location>
</feature>
<feature type="compositionally biased region" description="Basic residues" evidence="2">
    <location>
        <begin position="1"/>
        <end position="11"/>
    </location>
</feature>
<feature type="compositionally biased region" description="Acidic residues" evidence="2">
    <location>
        <begin position="24"/>
        <end position="36"/>
    </location>
</feature>
<feature type="compositionally biased region" description="Low complexity" evidence="2">
    <location>
        <begin position="110"/>
        <end position="120"/>
    </location>
</feature>
<feature type="compositionally biased region" description="Basic and acidic residues" evidence="2">
    <location>
        <begin position="123"/>
        <end position="134"/>
    </location>
</feature>
<feature type="compositionally biased region" description="Polar residues" evidence="2">
    <location>
        <begin position="187"/>
        <end position="205"/>
    </location>
</feature>
<feature type="compositionally biased region" description="Acidic residues" evidence="2">
    <location>
        <begin position="332"/>
        <end position="347"/>
    </location>
</feature>
<feature type="compositionally biased region" description="Polar residues" evidence="2">
    <location>
        <begin position="413"/>
        <end position="424"/>
    </location>
</feature>
<feature type="compositionally biased region" description="Low complexity" evidence="2">
    <location>
        <begin position="564"/>
        <end position="574"/>
    </location>
</feature>
<feature type="compositionally biased region" description="Polar residues" evidence="2">
    <location>
        <begin position="575"/>
        <end position="584"/>
    </location>
</feature>
<feature type="compositionally biased region" description="Low complexity" evidence="2">
    <location>
        <begin position="585"/>
        <end position="596"/>
    </location>
</feature>
<reference key="1">
    <citation type="journal article" date="2004" name="Science">
        <title>The Ashbya gossypii genome as a tool for mapping the ancient Saccharomyces cerevisiae genome.</title>
        <authorList>
            <person name="Dietrich F.S."/>
            <person name="Voegeli S."/>
            <person name="Brachat S."/>
            <person name="Lerch A."/>
            <person name="Gates K."/>
            <person name="Steiner S."/>
            <person name="Mohr C."/>
            <person name="Poehlmann R."/>
            <person name="Luedi P."/>
            <person name="Choi S."/>
            <person name="Wing R.A."/>
            <person name="Flavier A."/>
            <person name="Gaffney T.D."/>
            <person name="Philippsen P."/>
        </authorList>
    </citation>
    <scope>NUCLEOTIDE SEQUENCE [LARGE SCALE GENOMIC DNA]</scope>
    <source>
        <strain>ATCC 10895 / CBS 109.51 / FGSC 9923 / NRRL Y-1056</strain>
    </source>
</reference>
<reference key="2">
    <citation type="journal article" date="2013" name="G3 (Bethesda)">
        <title>Genomes of Ashbya fungi isolated from insects reveal four mating-type loci, numerous translocations, lack of transposons, and distinct gene duplications.</title>
        <authorList>
            <person name="Dietrich F.S."/>
            <person name="Voegeli S."/>
            <person name="Kuo S."/>
            <person name="Philippsen P."/>
        </authorList>
    </citation>
    <scope>GENOME REANNOTATION</scope>
    <scope>SEQUENCE REVISION TO C-TERMINUS</scope>
    <source>
        <strain>ATCC 10895 / CBS 109.51 / FGSC 9923 / NRRL Y-1056</strain>
    </source>
</reference>
<protein>
    <recommendedName>
        <fullName>Protein FYV8</fullName>
    </recommendedName>
</protein>
<name>FYV8_EREGS</name>
<dbReference type="EMBL" id="AE016816">
    <property type="protein sequence ID" value="AAS51263.2"/>
    <property type="molecule type" value="Genomic_DNA"/>
</dbReference>
<dbReference type="RefSeq" id="NP_983439.2">
    <property type="nucleotide sequence ID" value="NM_208792.2"/>
</dbReference>
<dbReference type="FunCoup" id="Q75C80">
    <property type="interactions" value="122"/>
</dbReference>
<dbReference type="STRING" id="284811.Q75C80"/>
<dbReference type="EnsemblFungi" id="AAS51263">
    <property type="protein sequence ID" value="AAS51263"/>
    <property type="gene ID" value="AGOS_ACR036C"/>
</dbReference>
<dbReference type="GeneID" id="4619564"/>
<dbReference type="KEGG" id="ago:AGOS_ACR036C"/>
<dbReference type="eggNOG" id="ENOG502QPM9">
    <property type="taxonomic scope" value="Eukaryota"/>
</dbReference>
<dbReference type="HOGENOM" id="CLU_009686_0_0_1"/>
<dbReference type="InParanoid" id="Q75C80"/>
<dbReference type="OMA" id="QHETICK"/>
<dbReference type="OrthoDB" id="4081733at2759"/>
<dbReference type="Proteomes" id="UP000000591">
    <property type="component" value="Chromosome III"/>
</dbReference>
<dbReference type="InterPro" id="IPR026248">
    <property type="entry name" value="Fyv8"/>
</dbReference>
<dbReference type="PRINTS" id="PR02076">
    <property type="entry name" value="PROTEINFYV8"/>
</dbReference>
<sequence length="751" mass="80988">MPDKVNRRKSQRWVSVSKGNYDGADWDSDYSGEELESSPTRQHETICKLPELPKLNLGGSTEERGRPGSGDGLAPRGAAEEEAASSGRGAATPAHEVQTPRSGAAAQKFSLTSSSRSVSSMNKELDTLMDEISKEMTAGGSEPPLVETRQSPVDFNRVGVPALKPEGHLADDSSDSDGEDAAGGSSLSQSFEHLNMSLKTDTASGQAMPLSSPRGSSALPAGRDSLALKKGASPDRASEGSLSSRSEDLLAVDRTAGENTRLKTTNSSDDDTDSLPELITSDAKFRADGASGPARVVSSGVETVIHRAIAPEVAPRLRITSKTDLSYRYDTSSEDDSEAYSGIEDDYLSYQPSPNISDAATFHGHRSRTGSPARAPHPLVEQEEHIELPVISDDDSTSKSSVRDNYYSEESDNTTSQALVTQDNSSHDTIHDTIRERSFDKSTSGSVTHSIPVIKDDNEDWQNQLRQQSVHLGAWNPDTEGKRGAFLTQASPMSTNKGMCGSQDEETTGDDQQLAEPCNDDSDSVWEGFPSVGEYEDLQSVADIKTIYDNQTLYNVPGIITSSTSVPPLPSSMSELTSRQDTSILSESTSGSGLDSDSLMRVVEGQRHAPKPSMFKENFGQTPEVQVEHLVNSPVPSLDICALIEGPQSHSFKRDKLNSHIEDLNAYSSGAQTWIKYALKSTQSSSNITFDEYVISKHVQDAYAQAEEVSKKHSVTNAVNQNVSQLRKKVFSHSMKEGAKGLLSSIGKKKL</sequence>
<organism>
    <name type="scientific">Eremothecium gossypii (strain ATCC 10895 / CBS 109.51 / FGSC 9923 / NRRL Y-1056)</name>
    <name type="common">Yeast</name>
    <name type="synonym">Ashbya gossypii</name>
    <dbReference type="NCBI Taxonomy" id="284811"/>
    <lineage>
        <taxon>Eukaryota</taxon>
        <taxon>Fungi</taxon>
        <taxon>Dikarya</taxon>
        <taxon>Ascomycota</taxon>
        <taxon>Saccharomycotina</taxon>
        <taxon>Saccharomycetes</taxon>
        <taxon>Saccharomycetales</taxon>
        <taxon>Saccharomycetaceae</taxon>
        <taxon>Eremothecium</taxon>
    </lineage>
</organism>
<proteinExistence type="inferred from homology"/>
<evidence type="ECO:0000250" key="1"/>
<evidence type="ECO:0000256" key="2">
    <source>
        <dbReference type="SAM" id="MobiDB-lite"/>
    </source>
</evidence>
<evidence type="ECO:0000305" key="3"/>
<gene>
    <name type="primary">FYV8</name>
    <name type="ordered locus">ACR036C</name>
</gene>
<comment type="function">
    <text evidence="1">Involved in the resistance to unfolded protein response (UPR)-inducing agents.</text>
</comment>
<comment type="similarity">
    <text evidence="3">Belongs to the FYV8 family.</text>
</comment>